<organism>
    <name type="scientific">Methylorubrum extorquens (strain ATCC 14718 / DSM 1338 / JCM 2805 / NCIMB 9133 / AM1)</name>
    <name type="common">Methylobacterium extorquens</name>
    <dbReference type="NCBI Taxonomy" id="272630"/>
    <lineage>
        <taxon>Bacteria</taxon>
        <taxon>Pseudomonadati</taxon>
        <taxon>Pseudomonadota</taxon>
        <taxon>Alphaproteobacteria</taxon>
        <taxon>Hyphomicrobiales</taxon>
        <taxon>Methylobacteriaceae</taxon>
        <taxon>Methylorubrum</taxon>
    </lineage>
</organism>
<name>MAUE_METEA</name>
<accession>Q49125</accession>
<accession>C5ATK5</accession>
<gene>
    <name type="primary">mauE</name>
    <name type="ordered locus">MexAM1_META1p2771</name>
</gene>
<proteinExistence type="predicted"/>
<protein>
    <recommendedName>
        <fullName>Methylamine utilization protein MauE</fullName>
    </recommendedName>
</protein>
<feature type="chain" id="PRO_0000208932" description="Methylamine utilization protein MauE">
    <location>
        <begin position="1"/>
        <end position="186"/>
    </location>
</feature>
<feature type="transmembrane region" description="Helical" evidence="1">
    <location>
        <begin position="2"/>
        <end position="22"/>
    </location>
</feature>
<feature type="transmembrane region" description="Helical" evidence="1">
    <location>
        <begin position="54"/>
        <end position="74"/>
    </location>
</feature>
<feature type="transmembrane region" description="Helical" evidence="1">
    <location>
        <begin position="76"/>
        <end position="96"/>
    </location>
</feature>
<feature type="transmembrane region" description="Helical" evidence="1">
    <location>
        <begin position="129"/>
        <end position="149"/>
    </location>
</feature>
<feature type="transmembrane region" description="Helical" evidence="1">
    <location>
        <begin position="151"/>
        <end position="171"/>
    </location>
</feature>
<keyword id="KW-1003">Cell membrane</keyword>
<keyword id="KW-0472">Membrane</keyword>
<keyword id="KW-1185">Reference proteome</keyword>
<keyword id="KW-0812">Transmembrane</keyword>
<keyword id="KW-1133">Transmembrane helix</keyword>
<sequence length="186" mass="19422">MIMALLAEPVVTTFVRAFLILLLASAAIPKLRHGEEFFGVVRNFRLMPEWLARPFALVLPWLELGIAVGLVLPVTAPLAAGLAGGLMVLFGIAIAINVARGRTAIDCGCFRNGMKQKLSWLLVGRNAGLALAAFGLAWLLPVAPAAGPFDLAIGFAAAGLTMLLIYGASLLSGLQSGARSSQLSKG</sequence>
<dbReference type="EMBL" id="L26406">
    <property type="protein sequence ID" value="AAB46934.1"/>
    <property type="status" value="ALT_INIT"/>
    <property type="molecule type" value="Genomic_DNA"/>
</dbReference>
<dbReference type="EMBL" id="CP001510">
    <property type="protein sequence ID" value="ACS40529.1"/>
    <property type="molecule type" value="Genomic_DNA"/>
</dbReference>
<dbReference type="RefSeq" id="WP_012753044.1">
    <property type="nucleotide sequence ID" value="NC_012808.1"/>
</dbReference>
<dbReference type="STRING" id="272630.MexAM1_META1p2771"/>
<dbReference type="TCDB" id="9.B.365.1.1">
    <property type="family name" value="the putative 4 - 5 tms doxd (doxd) superfamily"/>
</dbReference>
<dbReference type="KEGG" id="mea:Mex_1p2771"/>
<dbReference type="eggNOG" id="COG2259">
    <property type="taxonomic scope" value="Bacteria"/>
</dbReference>
<dbReference type="HOGENOM" id="CLU_101331_2_1_5"/>
<dbReference type="OrthoDB" id="4462029at2"/>
<dbReference type="UniPathway" id="UPA00895"/>
<dbReference type="Proteomes" id="UP000009081">
    <property type="component" value="Chromosome"/>
</dbReference>
<dbReference type="GO" id="GO:0005886">
    <property type="term" value="C:plasma membrane"/>
    <property type="evidence" value="ECO:0007669"/>
    <property type="project" value="UniProtKB-SubCell"/>
</dbReference>
<dbReference type="GO" id="GO:0030416">
    <property type="term" value="P:methylamine metabolic process"/>
    <property type="evidence" value="ECO:0007669"/>
    <property type="project" value="InterPro"/>
</dbReference>
<dbReference type="InterPro" id="IPR009908">
    <property type="entry name" value="Methylamine_util_MauE"/>
</dbReference>
<dbReference type="Pfam" id="PF07291">
    <property type="entry name" value="MauE"/>
    <property type="match status" value="1"/>
</dbReference>
<comment type="function">
    <text>May be specifically involved in the processing, transport, and/or maturation of the MADH beta-subunit.</text>
</comment>
<comment type="pathway">
    <text>One-carbon metabolism; methylamine degradation.</text>
</comment>
<comment type="subcellular location">
    <subcellularLocation>
        <location evidence="2">Cell membrane</location>
        <topology evidence="2">Multi-pass membrane protein</topology>
    </subcellularLocation>
</comment>
<comment type="sequence caution" evidence="2">
    <conflict type="erroneous initiation">
        <sequence resource="EMBL-CDS" id="AAB46934"/>
    </conflict>
</comment>
<evidence type="ECO:0000255" key="1"/>
<evidence type="ECO:0000305" key="2"/>
<reference key="1">
    <citation type="journal article" date="1994" name="J. Bacteriol.">
        <title>Genetic organization of the mau gene cluster in Methylobacterium extorquens AM1: complete nucleotide sequence and generation and characteristics of mau mutants.</title>
        <authorList>
            <person name="Chistoserdov A.Y."/>
            <person name="Chistoserdova L.V."/>
            <person name="McIntire W.S."/>
            <person name="Lidstrom M.E."/>
        </authorList>
    </citation>
    <scope>NUCLEOTIDE SEQUENCE [GENOMIC DNA]</scope>
</reference>
<reference key="2">
    <citation type="journal article" date="2009" name="PLoS ONE">
        <title>Methylobacterium genome sequences: a reference blueprint to investigate microbial metabolism of C1 compounds from natural and industrial sources.</title>
        <authorList>
            <person name="Vuilleumier S."/>
            <person name="Chistoserdova L."/>
            <person name="Lee M.-C."/>
            <person name="Bringel F."/>
            <person name="Lajus A."/>
            <person name="Zhou Y."/>
            <person name="Gourion B."/>
            <person name="Barbe V."/>
            <person name="Chang J."/>
            <person name="Cruveiller S."/>
            <person name="Dossat C."/>
            <person name="Gillett W."/>
            <person name="Gruffaz C."/>
            <person name="Haugen E."/>
            <person name="Hourcade E."/>
            <person name="Levy R."/>
            <person name="Mangenot S."/>
            <person name="Muller E."/>
            <person name="Nadalig T."/>
            <person name="Pagni M."/>
            <person name="Penny C."/>
            <person name="Peyraud R."/>
            <person name="Robinson D.G."/>
            <person name="Roche D."/>
            <person name="Rouy Z."/>
            <person name="Saenampechek C."/>
            <person name="Salvignol G."/>
            <person name="Vallenet D."/>
            <person name="Wu Z."/>
            <person name="Marx C.J."/>
            <person name="Vorholt J.A."/>
            <person name="Olson M.V."/>
            <person name="Kaul R."/>
            <person name="Weissenbach J."/>
            <person name="Medigue C."/>
            <person name="Lidstrom M.E."/>
        </authorList>
    </citation>
    <scope>NUCLEOTIDE SEQUENCE [LARGE SCALE GENOMIC DNA]</scope>
    <source>
        <strain>ATCC 14718 / DSM 1338 / JCM 2805 / NCIMB 9133 / AM1</strain>
    </source>
</reference>